<proteinExistence type="evidence at protein level"/>
<sequence length="422" mass="45939">MVMILRRSLINQGADSGAHRTFIPELHTPKMSQGPTLLSCGIMENDRWRDLDRKCPLQIDQPSASIWECLPEKCQDGSLWHQEAVTACAVTSLIKDLNINDHNGNPSAPPSKRQCRSLSFSDEMSSCRTSWRPLGSKVWTPVEKRRCYSGGSVQRYSNGVSPMQRSSSFSLPARANGLSSPCHQSSLHHRFGGQPCQGAPGSAPCGQAGDSWSPDPHPVGGGRLDLQRSLSCSHEQFSFPEYCPPSANSTPASTPELARRSSGLARSRSQPCVLNDKKIGVKRRRPDEVQEQRPSLDLAKMAQNCQTFSSLSCLNMGVDDHSSQSPFALVSSTRSWTALLSASSPGGRTPAGTPVPEPVPHSFDDQFTCQEDLSCDESDGCSLDEDCCRKGDPATSWRDRGACTNSLCSLDGELDIEQIENN</sequence>
<feature type="chain" id="PRO_0000189545" description="Protein FAM53B">
    <location>
        <begin position="1"/>
        <end position="422"/>
    </location>
</feature>
<feature type="region of interest" description="Disordered" evidence="3">
    <location>
        <begin position="193"/>
        <end position="225"/>
    </location>
</feature>
<feature type="region of interest" description="Disordered" evidence="3">
    <location>
        <begin position="243"/>
        <end position="269"/>
    </location>
</feature>
<feature type="short sequence motif" description="Nuclear localization signal" evidence="1">
    <location>
        <begin position="282"/>
        <end position="285"/>
    </location>
</feature>
<feature type="compositionally biased region" description="Low complexity" evidence="3">
    <location>
        <begin position="244"/>
        <end position="269"/>
    </location>
</feature>
<feature type="modified residue" description="Phosphoserine" evidence="2">
    <location>
        <position position="119"/>
    </location>
</feature>
<feature type="modified residue" description="Phosphoserine" evidence="2">
    <location>
        <position position="168"/>
    </location>
</feature>
<feature type="modified residue" description="Phosphoserine" evidence="2">
    <location>
        <position position="170"/>
    </location>
</feature>
<feature type="modified residue" description="Phosphoserine" evidence="2">
    <location>
        <position position="180"/>
    </location>
</feature>
<feature type="modified residue" description="Phosphoserine" evidence="7">
    <location>
        <position position="213"/>
    </location>
</feature>
<feature type="modified residue" description="Phosphoserine" evidence="7">
    <location>
        <position position="269"/>
    </location>
</feature>
<feature type="modified residue" description="Phosphoserine" evidence="7">
    <location>
        <position position="335"/>
    </location>
</feature>
<feature type="modified residue" description="Phosphoserine" evidence="7">
    <location>
        <position position="344"/>
    </location>
</feature>
<feature type="splice variant" id="VSP_009934" description="In isoform 2." evidence="4">
    <location>
        <begin position="1"/>
        <end position="30"/>
    </location>
</feature>
<feature type="sequence conflict" description="In Ref. 1; BAC27459." evidence="5" ref="1">
    <original>W</original>
    <variation>R</variation>
    <location>
        <position position="80"/>
    </location>
</feature>
<reference key="1">
    <citation type="journal article" date="2005" name="Science">
        <title>The transcriptional landscape of the mammalian genome.</title>
        <authorList>
            <person name="Carninci P."/>
            <person name="Kasukawa T."/>
            <person name="Katayama S."/>
            <person name="Gough J."/>
            <person name="Frith M.C."/>
            <person name="Maeda N."/>
            <person name="Oyama R."/>
            <person name="Ravasi T."/>
            <person name="Lenhard B."/>
            <person name="Wells C."/>
            <person name="Kodzius R."/>
            <person name="Shimokawa K."/>
            <person name="Bajic V.B."/>
            <person name="Brenner S.E."/>
            <person name="Batalov S."/>
            <person name="Forrest A.R."/>
            <person name="Zavolan M."/>
            <person name="Davis M.J."/>
            <person name="Wilming L.G."/>
            <person name="Aidinis V."/>
            <person name="Allen J.E."/>
            <person name="Ambesi-Impiombato A."/>
            <person name="Apweiler R."/>
            <person name="Aturaliya R.N."/>
            <person name="Bailey T.L."/>
            <person name="Bansal M."/>
            <person name="Baxter L."/>
            <person name="Beisel K.W."/>
            <person name="Bersano T."/>
            <person name="Bono H."/>
            <person name="Chalk A.M."/>
            <person name="Chiu K.P."/>
            <person name="Choudhary V."/>
            <person name="Christoffels A."/>
            <person name="Clutterbuck D.R."/>
            <person name="Crowe M.L."/>
            <person name="Dalla E."/>
            <person name="Dalrymple B.P."/>
            <person name="de Bono B."/>
            <person name="Della Gatta G."/>
            <person name="di Bernardo D."/>
            <person name="Down T."/>
            <person name="Engstrom P."/>
            <person name="Fagiolini M."/>
            <person name="Faulkner G."/>
            <person name="Fletcher C.F."/>
            <person name="Fukushima T."/>
            <person name="Furuno M."/>
            <person name="Futaki S."/>
            <person name="Gariboldi M."/>
            <person name="Georgii-Hemming P."/>
            <person name="Gingeras T.R."/>
            <person name="Gojobori T."/>
            <person name="Green R.E."/>
            <person name="Gustincich S."/>
            <person name="Harbers M."/>
            <person name="Hayashi Y."/>
            <person name="Hensch T.K."/>
            <person name="Hirokawa N."/>
            <person name="Hill D."/>
            <person name="Huminiecki L."/>
            <person name="Iacono M."/>
            <person name="Ikeo K."/>
            <person name="Iwama A."/>
            <person name="Ishikawa T."/>
            <person name="Jakt M."/>
            <person name="Kanapin A."/>
            <person name="Katoh M."/>
            <person name="Kawasawa Y."/>
            <person name="Kelso J."/>
            <person name="Kitamura H."/>
            <person name="Kitano H."/>
            <person name="Kollias G."/>
            <person name="Krishnan S.P."/>
            <person name="Kruger A."/>
            <person name="Kummerfeld S.K."/>
            <person name="Kurochkin I.V."/>
            <person name="Lareau L.F."/>
            <person name="Lazarevic D."/>
            <person name="Lipovich L."/>
            <person name="Liu J."/>
            <person name="Liuni S."/>
            <person name="McWilliam S."/>
            <person name="Madan Babu M."/>
            <person name="Madera M."/>
            <person name="Marchionni L."/>
            <person name="Matsuda H."/>
            <person name="Matsuzawa S."/>
            <person name="Miki H."/>
            <person name="Mignone F."/>
            <person name="Miyake S."/>
            <person name="Morris K."/>
            <person name="Mottagui-Tabar S."/>
            <person name="Mulder N."/>
            <person name="Nakano N."/>
            <person name="Nakauchi H."/>
            <person name="Ng P."/>
            <person name="Nilsson R."/>
            <person name="Nishiguchi S."/>
            <person name="Nishikawa S."/>
            <person name="Nori F."/>
            <person name="Ohara O."/>
            <person name="Okazaki Y."/>
            <person name="Orlando V."/>
            <person name="Pang K.C."/>
            <person name="Pavan W.J."/>
            <person name="Pavesi G."/>
            <person name="Pesole G."/>
            <person name="Petrovsky N."/>
            <person name="Piazza S."/>
            <person name="Reed J."/>
            <person name="Reid J.F."/>
            <person name="Ring B.Z."/>
            <person name="Ringwald M."/>
            <person name="Rost B."/>
            <person name="Ruan Y."/>
            <person name="Salzberg S.L."/>
            <person name="Sandelin A."/>
            <person name="Schneider C."/>
            <person name="Schoenbach C."/>
            <person name="Sekiguchi K."/>
            <person name="Semple C.A."/>
            <person name="Seno S."/>
            <person name="Sessa L."/>
            <person name="Sheng Y."/>
            <person name="Shibata Y."/>
            <person name="Shimada H."/>
            <person name="Shimada K."/>
            <person name="Silva D."/>
            <person name="Sinclair B."/>
            <person name="Sperling S."/>
            <person name="Stupka E."/>
            <person name="Sugiura K."/>
            <person name="Sultana R."/>
            <person name="Takenaka Y."/>
            <person name="Taki K."/>
            <person name="Tammoja K."/>
            <person name="Tan S.L."/>
            <person name="Tang S."/>
            <person name="Taylor M.S."/>
            <person name="Tegner J."/>
            <person name="Teichmann S.A."/>
            <person name="Ueda H.R."/>
            <person name="van Nimwegen E."/>
            <person name="Verardo R."/>
            <person name="Wei C.L."/>
            <person name="Yagi K."/>
            <person name="Yamanishi H."/>
            <person name="Zabarovsky E."/>
            <person name="Zhu S."/>
            <person name="Zimmer A."/>
            <person name="Hide W."/>
            <person name="Bult C."/>
            <person name="Grimmond S.M."/>
            <person name="Teasdale R.D."/>
            <person name="Liu E.T."/>
            <person name="Brusic V."/>
            <person name="Quackenbush J."/>
            <person name="Wahlestedt C."/>
            <person name="Mattick J.S."/>
            <person name="Hume D.A."/>
            <person name="Kai C."/>
            <person name="Sasaki D."/>
            <person name="Tomaru Y."/>
            <person name="Fukuda S."/>
            <person name="Kanamori-Katayama M."/>
            <person name="Suzuki M."/>
            <person name="Aoki J."/>
            <person name="Arakawa T."/>
            <person name="Iida J."/>
            <person name="Imamura K."/>
            <person name="Itoh M."/>
            <person name="Kato T."/>
            <person name="Kawaji H."/>
            <person name="Kawagashira N."/>
            <person name="Kawashima T."/>
            <person name="Kojima M."/>
            <person name="Kondo S."/>
            <person name="Konno H."/>
            <person name="Nakano K."/>
            <person name="Ninomiya N."/>
            <person name="Nishio T."/>
            <person name="Okada M."/>
            <person name="Plessy C."/>
            <person name="Shibata K."/>
            <person name="Shiraki T."/>
            <person name="Suzuki S."/>
            <person name="Tagami M."/>
            <person name="Waki K."/>
            <person name="Watahiki A."/>
            <person name="Okamura-Oho Y."/>
            <person name="Suzuki H."/>
            <person name="Kawai J."/>
            <person name="Hayashizaki Y."/>
        </authorList>
    </citation>
    <scope>NUCLEOTIDE SEQUENCE [LARGE SCALE MRNA] (ISOFORMS 1 AND 2)</scope>
    <source>
        <strain>C57BL/6J</strain>
        <tissue>Brain</tissue>
        <tissue>Spinal ganglion</tissue>
        <tissue>Testis</tissue>
    </source>
</reference>
<reference key="2">
    <citation type="journal article" date="2004" name="Genome Res.">
        <title>The status, quality, and expansion of the NIH full-length cDNA project: the Mammalian Gene Collection (MGC).</title>
        <authorList>
            <consortium name="The MGC Project Team"/>
        </authorList>
    </citation>
    <scope>NUCLEOTIDE SEQUENCE [LARGE SCALE MRNA] (ISOFORM 1)</scope>
    <source>
        <tissue>Eye</tissue>
    </source>
</reference>
<reference key="3">
    <citation type="journal article" date="2010" name="Cell">
        <title>A tissue-specific atlas of mouse protein phosphorylation and expression.</title>
        <authorList>
            <person name="Huttlin E.L."/>
            <person name="Jedrychowski M.P."/>
            <person name="Elias J.E."/>
            <person name="Goswami T."/>
            <person name="Rad R."/>
            <person name="Beausoleil S.A."/>
            <person name="Villen J."/>
            <person name="Haas W."/>
            <person name="Sowa M.E."/>
            <person name="Gygi S.P."/>
        </authorList>
    </citation>
    <scope>PHOSPHORYLATION [LARGE SCALE ANALYSIS] AT SER-213; SER-269; SER-335 AND SER-344</scope>
    <scope>IDENTIFICATION BY MASS SPECTROMETRY [LARGE SCALE ANALYSIS]</scope>
    <source>
        <tissue>Brain</tissue>
        <tissue>Brown adipose tissue</tissue>
        <tissue>Kidney</tissue>
        <tissue>Lung</tissue>
        <tissue>Spleen</tissue>
    </source>
</reference>
<accession>Q8BGR5</accession>
<accession>Q3UGW1</accession>
<accession>Q8BI13</accession>
<protein>
    <recommendedName>
        <fullName evidence="5">Protein FAM53B</fullName>
    </recommendedName>
</protein>
<evidence type="ECO:0000250" key="1">
    <source>
        <dbReference type="UniProtKB" id="F1QN48"/>
    </source>
</evidence>
<evidence type="ECO:0000250" key="2">
    <source>
        <dbReference type="UniProtKB" id="Q14153"/>
    </source>
</evidence>
<evidence type="ECO:0000256" key="3">
    <source>
        <dbReference type="SAM" id="MobiDB-lite"/>
    </source>
</evidence>
<evidence type="ECO:0000303" key="4">
    <source>
    </source>
</evidence>
<evidence type="ECO:0000305" key="5"/>
<evidence type="ECO:0000312" key="6">
    <source>
        <dbReference type="MGI" id="MGI:1925188"/>
    </source>
</evidence>
<evidence type="ECO:0007744" key="7">
    <source>
    </source>
</evidence>
<dbReference type="EMBL" id="AK031576">
    <property type="protein sequence ID" value="BAC27459.1"/>
    <property type="molecule type" value="mRNA"/>
</dbReference>
<dbReference type="EMBL" id="AK051299">
    <property type="protein sequence ID" value="BAC34597.1"/>
    <property type="molecule type" value="mRNA"/>
</dbReference>
<dbReference type="EMBL" id="AK147350">
    <property type="protein sequence ID" value="BAE27860.1"/>
    <property type="molecule type" value="mRNA"/>
</dbReference>
<dbReference type="EMBL" id="AK147725">
    <property type="protein sequence ID" value="BAE28096.1"/>
    <property type="molecule type" value="mRNA"/>
</dbReference>
<dbReference type="EMBL" id="BC035523">
    <property type="protein sequence ID" value="AAH35523.1"/>
    <property type="molecule type" value="mRNA"/>
</dbReference>
<dbReference type="CCDS" id="CCDS21926.1">
    <molecule id="Q8BGR5-1"/>
</dbReference>
<dbReference type="CCDS" id="CCDS85437.1">
    <molecule id="Q8BGR5-2"/>
</dbReference>
<dbReference type="RefSeq" id="NP_001334559.1">
    <molecule id="Q8BGR5-2"/>
    <property type="nucleotide sequence ID" value="NM_001347630.1"/>
</dbReference>
<dbReference type="RefSeq" id="NP_001368787.1">
    <molecule id="Q8BGR5-1"/>
    <property type="nucleotide sequence ID" value="NM_001381858.1"/>
</dbReference>
<dbReference type="RefSeq" id="NP_001368788.1">
    <molecule id="Q8BGR5-1"/>
    <property type="nucleotide sequence ID" value="NM_001381859.1"/>
</dbReference>
<dbReference type="RefSeq" id="NP_780477.2">
    <molecule id="Q8BGR5-1"/>
    <property type="nucleotide sequence ID" value="NM_175268.4"/>
</dbReference>
<dbReference type="RefSeq" id="NP_997638.1">
    <molecule id="Q8BGR5-1"/>
    <property type="nucleotide sequence ID" value="NM_212473.1"/>
</dbReference>
<dbReference type="RefSeq" id="XP_036009456.1">
    <molecule id="Q8BGR5-1"/>
    <property type="nucleotide sequence ID" value="XM_036153563.1"/>
</dbReference>
<dbReference type="RefSeq" id="XP_036009457.1">
    <molecule id="Q8BGR5-1"/>
    <property type="nucleotide sequence ID" value="XM_036153564.1"/>
</dbReference>
<dbReference type="FunCoup" id="Q8BGR5">
    <property type="interactions" value="1603"/>
</dbReference>
<dbReference type="STRING" id="10090.ENSMUSP00000095608"/>
<dbReference type="GlyGen" id="Q8BGR5">
    <property type="glycosylation" value="1 site"/>
</dbReference>
<dbReference type="iPTMnet" id="Q8BGR5"/>
<dbReference type="PhosphoSitePlus" id="Q8BGR5"/>
<dbReference type="jPOST" id="Q8BGR5"/>
<dbReference type="PaxDb" id="10090-ENSMUSP00000095608"/>
<dbReference type="ProteomicsDB" id="266823">
    <molecule id="Q8BGR5-1"/>
</dbReference>
<dbReference type="ProteomicsDB" id="266824">
    <molecule id="Q8BGR5-2"/>
</dbReference>
<dbReference type="Antibodypedia" id="48489">
    <property type="antibodies" value="41 antibodies from 11 providers"/>
</dbReference>
<dbReference type="Ensembl" id="ENSMUST00000065371.14">
    <molecule id="Q8BGR5-1"/>
    <property type="protein sequence ID" value="ENSMUSP00000070763.8"/>
    <property type="gene ID" value="ENSMUSG00000030956.16"/>
</dbReference>
<dbReference type="Ensembl" id="ENSMUST00000097999.9">
    <molecule id="Q8BGR5-1"/>
    <property type="protein sequence ID" value="ENSMUSP00000095608.3"/>
    <property type="gene ID" value="ENSMUSG00000030956.16"/>
</dbReference>
<dbReference type="Ensembl" id="ENSMUST00000106168.2">
    <molecule id="Q8BGR5-2"/>
    <property type="protein sequence ID" value="ENSMUSP00000101774.2"/>
    <property type="gene ID" value="ENSMUSG00000030956.16"/>
</dbReference>
<dbReference type="Ensembl" id="ENSMUST00000106169.8">
    <molecule id="Q8BGR5-1"/>
    <property type="protein sequence ID" value="ENSMUSP00000101775.2"/>
    <property type="gene ID" value="ENSMUSG00000030956.16"/>
</dbReference>
<dbReference type="GeneID" id="77938"/>
<dbReference type="KEGG" id="mmu:77938"/>
<dbReference type="UCSC" id="uc009kcf.1">
    <molecule id="Q8BGR5-1"/>
    <property type="organism name" value="mouse"/>
</dbReference>
<dbReference type="AGR" id="MGI:1925188"/>
<dbReference type="CTD" id="9679"/>
<dbReference type="MGI" id="MGI:1925188">
    <property type="gene designation" value="Fam53b"/>
</dbReference>
<dbReference type="VEuPathDB" id="HostDB:ENSMUSG00000030956"/>
<dbReference type="eggNOG" id="ENOG502QQM7">
    <property type="taxonomic scope" value="Eukaryota"/>
</dbReference>
<dbReference type="GeneTree" id="ENSGT00530000063371"/>
<dbReference type="HOGENOM" id="CLU_054215_2_0_1"/>
<dbReference type="InParanoid" id="Q8BGR5"/>
<dbReference type="OMA" id="WSPDPNP"/>
<dbReference type="OrthoDB" id="9934966at2759"/>
<dbReference type="PhylomeDB" id="Q8BGR5"/>
<dbReference type="TreeFam" id="TF332095"/>
<dbReference type="BioGRID-ORCS" id="77938">
    <property type="hits" value="4 hits in 77 CRISPR screens"/>
</dbReference>
<dbReference type="ChiTaRS" id="Fam53b">
    <property type="organism name" value="mouse"/>
</dbReference>
<dbReference type="PRO" id="PR:Q8BGR5"/>
<dbReference type="Proteomes" id="UP000000589">
    <property type="component" value="Chromosome 7"/>
</dbReference>
<dbReference type="RNAct" id="Q8BGR5">
    <property type="molecule type" value="protein"/>
</dbReference>
<dbReference type="Bgee" id="ENSMUSG00000030956">
    <property type="expression patterns" value="Expressed in rostral migratory stream and 191 other cell types or tissues"/>
</dbReference>
<dbReference type="ExpressionAtlas" id="Q8BGR5">
    <property type="expression patterns" value="baseline and differential"/>
</dbReference>
<dbReference type="GO" id="GO:0005634">
    <property type="term" value="C:nucleus"/>
    <property type="evidence" value="ECO:0000250"/>
    <property type="project" value="UniProtKB"/>
</dbReference>
<dbReference type="GO" id="GO:0090263">
    <property type="term" value="P:positive regulation of canonical Wnt signaling pathway"/>
    <property type="evidence" value="ECO:0000250"/>
    <property type="project" value="UniProtKB"/>
</dbReference>
<dbReference type="GO" id="GO:0060828">
    <property type="term" value="P:regulation of canonical Wnt signaling pathway"/>
    <property type="evidence" value="ECO:0000250"/>
    <property type="project" value="UniProtKB"/>
</dbReference>
<dbReference type="GO" id="GO:0016055">
    <property type="term" value="P:Wnt signaling pathway"/>
    <property type="evidence" value="ECO:0007669"/>
    <property type="project" value="UniProtKB-KW"/>
</dbReference>
<dbReference type="InterPro" id="IPR029356">
    <property type="entry name" value="FAM53"/>
</dbReference>
<dbReference type="PANTHER" id="PTHR28567">
    <property type="entry name" value="PROTEIN FAM53A-LIKE ISOFORM X1"/>
    <property type="match status" value="1"/>
</dbReference>
<dbReference type="PANTHER" id="PTHR28567:SF1">
    <property type="entry name" value="PROTEIN FAM53B"/>
    <property type="match status" value="1"/>
</dbReference>
<dbReference type="Pfam" id="PF15242">
    <property type="entry name" value="FAM53"/>
    <property type="match status" value="1"/>
</dbReference>
<keyword id="KW-0025">Alternative splicing</keyword>
<keyword id="KW-0539">Nucleus</keyword>
<keyword id="KW-0597">Phosphoprotein</keyword>
<keyword id="KW-1185">Reference proteome</keyword>
<keyword id="KW-0879">Wnt signaling pathway</keyword>
<organism>
    <name type="scientific">Mus musculus</name>
    <name type="common">Mouse</name>
    <dbReference type="NCBI Taxonomy" id="10090"/>
    <lineage>
        <taxon>Eukaryota</taxon>
        <taxon>Metazoa</taxon>
        <taxon>Chordata</taxon>
        <taxon>Craniata</taxon>
        <taxon>Vertebrata</taxon>
        <taxon>Euteleostomi</taxon>
        <taxon>Mammalia</taxon>
        <taxon>Eutheria</taxon>
        <taxon>Euarchontoglires</taxon>
        <taxon>Glires</taxon>
        <taxon>Rodentia</taxon>
        <taxon>Myomorpha</taxon>
        <taxon>Muroidea</taxon>
        <taxon>Muridae</taxon>
        <taxon>Murinae</taxon>
        <taxon>Mus</taxon>
        <taxon>Mus</taxon>
    </lineage>
</organism>
<comment type="function">
    <text evidence="2">Acts as a regulator of Wnt signaling pathway by regulating beta-catenin (CTNNB1) nuclear localization.</text>
</comment>
<comment type="subunit">
    <text evidence="2">Interacts with CTNNB1.</text>
</comment>
<comment type="subcellular location">
    <subcellularLocation>
        <location evidence="2">Nucleus</location>
    </subcellularLocation>
</comment>
<comment type="alternative products">
    <event type="alternative splicing"/>
    <isoform>
        <id>Q8BGR5-1</id>
        <name>1</name>
        <sequence type="displayed"/>
    </isoform>
    <isoform>
        <id>Q8BGR5-2</id>
        <name>2</name>
        <sequence type="described" ref="VSP_009934"/>
    </isoform>
</comment>
<comment type="similarity">
    <text evidence="5">Belongs to the FAM53 family.</text>
</comment>
<gene>
    <name evidence="6" type="primary">Fam53b</name>
</gene>
<name>FA53B_MOUSE</name>